<organism>
    <name type="scientific">Stigeoclonium helveticum</name>
    <name type="common">Green alga</name>
    <dbReference type="NCBI Taxonomy" id="55999"/>
    <lineage>
        <taxon>Eukaryota</taxon>
        <taxon>Viridiplantae</taxon>
        <taxon>Chlorophyta</taxon>
        <taxon>core chlorophytes</taxon>
        <taxon>Chlorophyceae</taxon>
        <taxon>OCC clade</taxon>
        <taxon>Chaetophorales</taxon>
        <taxon>Chaetophoraceae</taxon>
        <taxon>Stigeoclonium</taxon>
    </lineage>
</organism>
<protein>
    <recommendedName>
        <fullName evidence="1">Large ribosomal subunit protein uL16c</fullName>
    </recommendedName>
    <alternativeName>
        <fullName evidence="2">50S ribosomal protein L16, chloroplastic</fullName>
    </alternativeName>
</protein>
<evidence type="ECO:0000255" key="1">
    <source>
        <dbReference type="HAMAP-Rule" id="MF_01342"/>
    </source>
</evidence>
<evidence type="ECO:0000305" key="2"/>
<accession>Q06SG9</accession>
<name>RK16_STIHE</name>
<keyword id="KW-0150">Chloroplast</keyword>
<keyword id="KW-0934">Plastid</keyword>
<keyword id="KW-0687">Ribonucleoprotein</keyword>
<keyword id="KW-0689">Ribosomal protein</keyword>
<dbReference type="EMBL" id="DQ630521">
    <property type="protein sequence ID" value="ABF60182.1"/>
    <property type="molecule type" value="Genomic_DNA"/>
</dbReference>
<dbReference type="RefSeq" id="YP_764397.1">
    <property type="nucleotide sequence ID" value="NC_008372.1"/>
</dbReference>
<dbReference type="SMR" id="Q06SG9"/>
<dbReference type="GeneID" id="4308362"/>
<dbReference type="GO" id="GO:0009507">
    <property type="term" value="C:chloroplast"/>
    <property type="evidence" value="ECO:0007669"/>
    <property type="project" value="UniProtKB-SubCell"/>
</dbReference>
<dbReference type="GO" id="GO:0005762">
    <property type="term" value="C:mitochondrial large ribosomal subunit"/>
    <property type="evidence" value="ECO:0007669"/>
    <property type="project" value="TreeGrafter"/>
</dbReference>
<dbReference type="GO" id="GO:0019843">
    <property type="term" value="F:rRNA binding"/>
    <property type="evidence" value="ECO:0007669"/>
    <property type="project" value="InterPro"/>
</dbReference>
<dbReference type="GO" id="GO:0003735">
    <property type="term" value="F:structural constituent of ribosome"/>
    <property type="evidence" value="ECO:0007669"/>
    <property type="project" value="InterPro"/>
</dbReference>
<dbReference type="GO" id="GO:0032543">
    <property type="term" value="P:mitochondrial translation"/>
    <property type="evidence" value="ECO:0007669"/>
    <property type="project" value="TreeGrafter"/>
</dbReference>
<dbReference type="CDD" id="cd01433">
    <property type="entry name" value="Ribosomal_L16_L10e"/>
    <property type="match status" value="1"/>
</dbReference>
<dbReference type="FunFam" id="3.90.1170.10:FF:000001">
    <property type="entry name" value="50S ribosomal protein L16"/>
    <property type="match status" value="1"/>
</dbReference>
<dbReference type="Gene3D" id="3.90.1170.10">
    <property type="entry name" value="Ribosomal protein L10e/L16"/>
    <property type="match status" value="1"/>
</dbReference>
<dbReference type="HAMAP" id="MF_01342">
    <property type="entry name" value="Ribosomal_uL16"/>
    <property type="match status" value="1"/>
</dbReference>
<dbReference type="InterPro" id="IPR047873">
    <property type="entry name" value="Ribosomal_uL16"/>
</dbReference>
<dbReference type="InterPro" id="IPR000114">
    <property type="entry name" value="Ribosomal_uL16_bact-type"/>
</dbReference>
<dbReference type="InterPro" id="IPR020798">
    <property type="entry name" value="Ribosomal_uL16_CS"/>
</dbReference>
<dbReference type="InterPro" id="IPR016180">
    <property type="entry name" value="Ribosomal_uL16_dom"/>
</dbReference>
<dbReference type="InterPro" id="IPR036920">
    <property type="entry name" value="Ribosomal_uL16_sf"/>
</dbReference>
<dbReference type="NCBIfam" id="TIGR01164">
    <property type="entry name" value="rplP_bact"/>
    <property type="match status" value="1"/>
</dbReference>
<dbReference type="PANTHER" id="PTHR12220">
    <property type="entry name" value="50S/60S RIBOSOMAL PROTEIN L16"/>
    <property type="match status" value="1"/>
</dbReference>
<dbReference type="PANTHER" id="PTHR12220:SF13">
    <property type="entry name" value="LARGE RIBOSOMAL SUBUNIT PROTEIN UL16M"/>
    <property type="match status" value="1"/>
</dbReference>
<dbReference type="Pfam" id="PF00252">
    <property type="entry name" value="Ribosomal_L16"/>
    <property type="match status" value="1"/>
</dbReference>
<dbReference type="PRINTS" id="PR00060">
    <property type="entry name" value="RIBOSOMALL16"/>
</dbReference>
<dbReference type="SUPFAM" id="SSF54686">
    <property type="entry name" value="Ribosomal protein L16p/L10e"/>
    <property type="match status" value="1"/>
</dbReference>
<dbReference type="PROSITE" id="PS00586">
    <property type="entry name" value="RIBOSOMAL_L16_1"/>
    <property type="match status" value="1"/>
</dbReference>
<dbReference type="PROSITE" id="PS00701">
    <property type="entry name" value="RIBOSOMAL_L16_2"/>
    <property type="match status" value="1"/>
</dbReference>
<feature type="chain" id="PRO_0000276390" description="Large ribosomal subunit protein uL16c">
    <location>
        <begin position="1"/>
        <end position="135"/>
    </location>
</feature>
<geneLocation type="chloroplast"/>
<comment type="subunit">
    <text evidence="1">Part of the 50S ribosomal subunit.</text>
</comment>
<comment type="subcellular location">
    <subcellularLocation>
        <location>Plastid</location>
        <location>Chloroplast</location>
    </subcellularLocation>
</comment>
<comment type="similarity">
    <text evidence="1">Belongs to the universal ribosomal protein uL16 family.</text>
</comment>
<gene>
    <name evidence="1" type="primary">rpl16</name>
</gene>
<proteinExistence type="inferred from homology"/>
<reference key="1">
    <citation type="journal article" date="2006" name="Mol. Genet. Genomics">
        <title>Distinctive architecture of the chloroplast genome in the chlorophycean green alga Stigeoclonium helveticum.</title>
        <authorList>
            <person name="Belanger A.-S."/>
            <person name="Brouard J.-S."/>
            <person name="Charlebois P."/>
            <person name="Otis C."/>
            <person name="Lemieux C."/>
            <person name="Turmel M."/>
        </authorList>
    </citation>
    <scope>NUCLEOTIDE SEQUENCE [LARGE SCALE GENOMIC DNA]</scope>
    <source>
        <strain>UTEX 441</strain>
    </source>
</reference>
<sequence>MLSPKRTKYRKYHRGRMKGKALRGSKIVYGGFALQATEPCWITSRQIEAGRRVLTRFVKRGGKLWIRIFPDKPVTMRAAGSRMGSGKGAPAYWVAVVKPGRIIYEMKGVSDKIATRALKIAGYKMPVKTKVLKPL</sequence>